<organism>
    <name type="scientific">Yersinia pseudotuberculosis serotype O:1b (strain IP 31758)</name>
    <dbReference type="NCBI Taxonomy" id="349747"/>
    <lineage>
        <taxon>Bacteria</taxon>
        <taxon>Pseudomonadati</taxon>
        <taxon>Pseudomonadota</taxon>
        <taxon>Gammaproteobacteria</taxon>
        <taxon>Enterobacterales</taxon>
        <taxon>Yersiniaceae</taxon>
        <taxon>Yersinia</taxon>
    </lineage>
</organism>
<dbReference type="EC" id="2.1.3.2" evidence="1"/>
<dbReference type="EMBL" id="CP000720">
    <property type="protein sequence ID" value="ABS46721.1"/>
    <property type="molecule type" value="Genomic_DNA"/>
</dbReference>
<dbReference type="RefSeq" id="WP_012104413.1">
    <property type="nucleotide sequence ID" value="NC_009708.1"/>
</dbReference>
<dbReference type="SMR" id="A7FDV1"/>
<dbReference type="GeneID" id="49784482"/>
<dbReference type="KEGG" id="ypi:YpsIP31758_0436"/>
<dbReference type="HOGENOM" id="CLU_043846_1_2_6"/>
<dbReference type="UniPathway" id="UPA00070">
    <property type="reaction ID" value="UER00116"/>
</dbReference>
<dbReference type="Proteomes" id="UP000002412">
    <property type="component" value="Chromosome"/>
</dbReference>
<dbReference type="GO" id="GO:0005829">
    <property type="term" value="C:cytosol"/>
    <property type="evidence" value="ECO:0007669"/>
    <property type="project" value="TreeGrafter"/>
</dbReference>
<dbReference type="GO" id="GO:0016597">
    <property type="term" value="F:amino acid binding"/>
    <property type="evidence" value="ECO:0007669"/>
    <property type="project" value="InterPro"/>
</dbReference>
<dbReference type="GO" id="GO:0004070">
    <property type="term" value="F:aspartate carbamoyltransferase activity"/>
    <property type="evidence" value="ECO:0007669"/>
    <property type="project" value="UniProtKB-UniRule"/>
</dbReference>
<dbReference type="GO" id="GO:0006207">
    <property type="term" value="P:'de novo' pyrimidine nucleobase biosynthetic process"/>
    <property type="evidence" value="ECO:0007669"/>
    <property type="project" value="InterPro"/>
</dbReference>
<dbReference type="GO" id="GO:0044205">
    <property type="term" value="P:'de novo' UMP biosynthetic process"/>
    <property type="evidence" value="ECO:0007669"/>
    <property type="project" value="UniProtKB-UniRule"/>
</dbReference>
<dbReference type="GO" id="GO:0006520">
    <property type="term" value="P:amino acid metabolic process"/>
    <property type="evidence" value="ECO:0007669"/>
    <property type="project" value="InterPro"/>
</dbReference>
<dbReference type="FunFam" id="3.40.50.1370:FF:000001">
    <property type="entry name" value="Aspartate carbamoyltransferase"/>
    <property type="match status" value="1"/>
</dbReference>
<dbReference type="FunFam" id="3.40.50.1370:FF:000002">
    <property type="entry name" value="Aspartate carbamoyltransferase 2"/>
    <property type="match status" value="1"/>
</dbReference>
<dbReference type="Gene3D" id="3.40.50.1370">
    <property type="entry name" value="Aspartate/ornithine carbamoyltransferase"/>
    <property type="match status" value="2"/>
</dbReference>
<dbReference type="HAMAP" id="MF_00001">
    <property type="entry name" value="Asp_carb_tr"/>
    <property type="match status" value="1"/>
</dbReference>
<dbReference type="InterPro" id="IPR006132">
    <property type="entry name" value="Asp/Orn_carbamoyltranf_P-bd"/>
</dbReference>
<dbReference type="InterPro" id="IPR006130">
    <property type="entry name" value="Asp/Orn_carbamoylTrfase"/>
</dbReference>
<dbReference type="InterPro" id="IPR036901">
    <property type="entry name" value="Asp/Orn_carbamoylTrfase_sf"/>
</dbReference>
<dbReference type="InterPro" id="IPR002082">
    <property type="entry name" value="Asp_carbamoyltransf"/>
</dbReference>
<dbReference type="InterPro" id="IPR006131">
    <property type="entry name" value="Asp_carbamoyltransf_Asp/Orn-bd"/>
</dbReference>
<dbReference type="NCBIfam" id="TIGR00670">
    <property type="entry name" value="asp_carb_tr"/>
    <property type="match status" value="1"/>
</dbReference>
<dbReference type="NCBIfam" id="NF002032">
    <property type="entry name" value="PRK00856.1"/>
    <property type="match status" value="1"/>
</dbReference>
<dbReference type="PANTHER" id="PTHR45753:SF6">
    <property type="entry name" value="ASPARTATE CARBAMOYLTRANSFERASE"/>
    <property type="match status" value="1"/>
</dbReference>
<dbReference type="PANTHER" id="PTHR45753">
    <property type="entry name" value="ORNITHINE CARBAMOYLTRANSFERASE, MITOCHONDRIAL"/>
    <property type="match status" value="1"/>
</dbReference>
<dbReference type="Pfam" id="PF00185">
    <property type="entry name" value="OTCace"/>
    <property type="match status" value="1"/>
</dbReference>
<dbReference type="Pfam" id="PF02729">
    <property type="entry name" value="OTCace_N"/>
    <property type="match status" value="1"/>
</dbReference>
<dbReference type="PRINTS" id="PR00100">
    <property type="entry name" value="AOTCASE"/>
</dbReference>
<dbReference type="PRINTS" id="PR00101">
    <property type="entry name" value="ATCASE"/>
</dbReference>
<dbReference type="SUPFAM" id="SSF53671">
    <property type="entry name" value="Aspartate/ornithine carbamoyltransferase"/>
    <property type="match status" value="1"/>
</dbReference>
<dbReference type="PROSITE" id="PS00097">
    <property type="entry name" value="CARBAMOYLTRANSFERASE"/>
    <property type="match status" value="1"/>
</dbReference>
<gene>
    <name evidence="1" type="primary">pyrB</name>
    <name type="ordered locus">YpsIP31758_0436</name>
</gene>
<evidence type="ECO:0000255" key="1">
    <source>
        <dbReference type="HAMAP-Rule" id="MF_00001"/>
    </source>
</evidence>
<comment type="function">
    <text evidence="1">Catalyzes the condensation of carbamoyl phosphate and aspartate to form carbamoyl aspartate and inorganic phosphate, the committed step in the de novo pyrimidine nucleotide biosynthesis pathway.</text>
</comment>
<comment type="catalytic activity">
    <reaction evidence="1">
        <text>carbamoyl phosphate + L-aspartate = N-carbamoyl-L-aspartate + phosphate + H(+)</text>
        <dbReference type="Rhea" id="RHEA:20013"/>
        <dbReference type="ChEBI" id="CHEBI:15378"/>
        <dbReference type="ChEBI" id="CHEBI:29991"/>
        <dbReference type="ChEBI" id="CHEBI:32814"/>
        <dbReference type="ChEBI" id="CHEBI:43474"/>
        <dbReference type="ChEBI" id="CHEBI:58228"/>
        <dbReference type="EC" id="2.1.3.2"/>
    </reaction>
</comment>
<comment type="pathway">
    <text evidence="1">Pyrimidine metabolism; UMP biosynthesis via de novo pathway; (S)-dihydroorotate from bicarbonate: step 2/3.</text>
</comment>
<comment type="subunit">
    <text evidence="1">Heterododecamer (2C3:3R2) of six catalytic PyrB chains organized as two trimers (C3), and six regulatory PyrI chains organized as three dimers (R2).</text>
</comment>
<comment type="similarity">
    <text evidence="1">Belongs to the aspartate/ornithine carbamoyltransferase superfamily. ATCase family.</text>
</comment>
<sequence length="311" mass="34578">MANPLYHKHIISINDLSRDELELVLRTAASLKKTPQPELLKHKVIASCFFEASTRTRLSFETSIHRLGASVVGFSDSSNTSLGKKGETLADTMSVISTYVDAIVMRHPQEGASRLAAQFSGNVPIVNAGDGANQHPTQTLLDLFTIQETQGRLDNINIAMVGDLKYGRTVHSLTQALAKFNGNRFFFIAPDALAMPAYILQMLEEKEIEYSLHESLEEVVPELDILYMTRVQKERLDPSEYANVKAQFILRSSDLTGARDNLKVLHPLPRIDEITTDVDKTPYAYYFQQAGNGIFARQALLALVLNAELAL</sequence>
<name>PYRB_YERP3</name>
<proteinExistence type="inferred from homology"/>
<feature type="chain" id="PRO_1000057013" description="Aspartate carbamoyltransferase catalytic subunit">
    <location>
        <begin position="1"/>
        <end position="311"/>
    </location>
</feature>
<feature type="binding site" evidence="1">
    <location>
        <position position="55"/>
    </location>
    <ligand>
        <name>carbamoyl phosphate</name>
        <dbReference type="ChEBI" id="CHEBI:58228"/>
    </ligand>
</feature>
<feature type="binding site" evidence="1">
    <location>
        <position position="56"/>
    </location>
    <ligand>
        <name>carbamoyl phosphate</name>
        <dbReference type="ChEBI" id="CHEBI:58228"/>
    </ligand>
</feature>
<feature type="binding site" evidence="1">
    <location>
        <position position="85"/>
    </location>
    <ligand>
        <name>L-aspartate</name>
        <dbReference type="ChEBI" id="CHEBI:29991"/>
    </ligand>
</feature>
<feature type="binding site" evidence="1">
    <location>
        <position position="106"/>
    </location>
    <ligand>
        <name>carbamoyl phosphate</name>
        <dbReference type="ChEBI" id="CHEBI:58228"/>
    </ligand>
</feature>
<feature type="binding site" evidence="1">
    <location>
        <position position="135"/>
    </location>
    <ligand>
        <name>carbamoyl phosphate</name>
        <dbReference type="ChEBI" id="CHEBI:58228"/>
    </ligand>
</feature>
<feature type="binding site" evidence="1">
    <location>
        <position position="138"/>
    </location>
    <ligand>
        <name>carbamoyl phosphate</name>
        <dbReference type="ChEBI" id="CHEBI:58228"/>
    </ligand>
</feature>
<feature type="binding site" evidence="1">
    <location>
        <position position="168"/>
    </location>
    <ligand>
        <name>L-aspartate</name>
        <dbReference type="ChEBI" id="CHEBI:29991"/>
    </ligand>
</feature>
<feature type="binding site" evidence="1">
    <location>
        <position position="230"/>
    </location>
    <ligand>
        <name>L-aspartate</name>
        <dbReference type="ChEBI" id="CHEBI:29991"/>
    </ligand>
</feature>
<feature type="binding site" evidence="1">
    <location>
        <position position="268"/>
    </location>
    <ligand>
        <name>carbamoyl phosphate</name>
        <dbReference type="ChEBI" id="CHEBI:58228"/>
    </ligand>
</feature>
<feature type="binding site" evidence="1">
    <location>
        <position position="269"/>
    </location>
    <ligand>
        <name>carbamoyl phosphate</name>
        <dbReference type="ChEBI" id="CHEBI:58228"/>
    </ligand>
</feature>
<reference key="1">
    <citation type="journal article" date="2007" name="PLoS Genet.">
        <title>The complete genome sequence of Yersinia pseudotuberculosis IP31758, the causative agent of Far East scarlet-like fever.</title>
        <authorList>
            <person name="Eppinger M."/>
            <person name="Rosovitz M.J."/>
            <person name="Fricke W.F."/>
            <person name="Rasko D.A."/>
            <person name="Kokorina G."/>
            <person name="Fayolle C."/>
            <person name="Lindler L.E."/>
            <person name="Carniel E."/>
            <person name="Ravel J."/>
        </authorList>
    </citation>
    <scope>NUCLEOTIDE SEQUENCE [LARGE SCALE GENOMIC DNA]</scope>
    <source>
        <strain>IP 31758</strain>
    </source>
</reference>
<accession>A7FDV1</accession>
<keyword id="KW-0665">Pyrimidine biosynthesis</keyword>
<keyword id="KW-0808">Transferase</keyword>
<protein>
    <recommendedName>
        <fullName evidence="1">Aspartate carbamoyltransferase catalytic subunit</fullName>
        <ecNumber evidence="1">2.1.3.2</ecNumber>
    </recommendedName>
    <alternativeName>
        <fullName evidence="1">Aspartate transcarbamylase</fullName>
        <shortName evidence="1">ATCase</shortName>
    </alternativeName>
</protein>